<keyword id="KW-0067">ATP-binding</keyword>
<keyword id="KW-0238">DNA-binding</keyword>
<keyword id="KW-0479">Metal-binding</keyword>
<keyword id="KW-0547">Nucleotide-binding</keyword>
<keyword id="KW-1185">Reference proteome</keyword>
<keyword id="KW-0678">Repressor</keyword>
<keyword id="KW-0804">Transcription</keyword>
<keyword id="KW-0805">Transcription regulation</keyword>
<keyword id="KW-0862">Zinc</keyword>
<keyword id="KW-0863">Zinc-finger</keyword>
<name>NRDR_LACPL</name>
<gene>
    <name evidence="1" type="primary">nrdR</name>
    <name type="ordered locus">lp_1511</name>
</gene>
<feature type="chain" id="PRO_0000182307" description="Transcriptional repressor NrdR">
    <location>
        <begin position="1"/>
        <end position="171"/>
    </location>
</feature>
<feature type="domain" description="ATP-cone" evidence="1">
    <location>
        <begin position="49"/>
        <end position="139"/>
    </location>
</feature>
<feature type="zinc finger region" evidence="1">
    <location>
        <begin position="3"/>
        <end position="34"/>
    </location>
</feature>
<feature type="region of interest" description="Disordered" evidence="2">
    <location>
        <begin position="1"/>
        <end position="21"/>
    </location>
</feature>
<feature type="region of interest" description="Disordered" evidence="2">
    <location>
        <begin position="152"/>
        <end position="171"/>
    </location>
</feature>
<feature type="compositionally biased region" description="Basic residues" evidence="2">
    <location>
        <begin position="1"/>
        <end position="10"/>
    </location>
</feature>
<accession>Q88WV2</accession>
<accession>F9UNP8</accession>
<organism>
    <name type="scientific">Lactiplantibacillus plantarum (strain ATCC BAA-793 / NCIMB 8826 / WCFS1)</name>
    <name type="common">Lactobacillus plantarum</name>
    <dbReference type="NCBI Taxonomy" id="220668"/>
    <lineage>
        <taxon>Bacteria</taxon>
        <taxon>Bacillati</taxon>
        <taxon>Bacillota</taxon>
        <taxon>Bacilli</taxon>
        <taxon>Lactobacillales</taxon>
        <taxon>Lactobacillaceae</taxon>
        <taxon>Lactiplantibacillus</taxon>
    </lineage>
</organism>
<reference key="1">
    <citation type="journal article" date="2003" name="Proc. Natl. Acad. Sci. U.S.A.">
        <title>Complete genome sequence of Lactobacillus plantarum WCFS1.</title>
        <authorList>
            <person name="Kleerebezem M."/>
            <person name="Boekhorst J."/>
            <person name="van Kranenburg R."/>
            <person name="Molenaar D."/>
            <person name="Kuipers O.P."/>
            <person name="Leer R."/>
            <person name="Tarchini R."/>
            <person name="Peters S.A."/>
            <person name="Sandbrink H.M."/>
            <person name="Fiers M.W.E.J."/>
            <person name="Stiekema W."/>
            <person name="Klein Lankhorst R.M."/>
            <person name="Bron P.A."/>
            <person name="Hoffer S.M."/>
            <person name="Nierop Groot M.N."/>
            <person name="Kerkhoven R."/>
            <person name="De Vries M."/>
            <person name="Ursing B."/>
            <person name="De Vos W.M."/>
            <person name="Siezen R.J."/>
        </authorList>
    </citation>
    <scope>NUCLEOTIDE SEQUENCE [LARGE SCALE GENOMIC DNA]</scope>
    <source>
        <strain>ATCC BAA-793 / NCIMB 8826 / WCFS1</strain>
    </source>
</reference>
<reference key="2">
    <citation type="journal article" date="2012" name="J. Bacteriol.">
        <title>Complete resequencing and reannotation of the Lactobacillus plantarum WCFS1 genome.</title>
        <authorList>
            <person name="Siezen R.J."/>
            <person name="Francke C."/>
            <person name="Renckens B."/>
            <person name="Boekhorst J."/>
            <person name="Wels M."/>
            <person name="Kleerebezem M."/>
            <person name="van Hijum S.A."/>
        </authorList>
    </citation>
    <scope>NUCLEOTIDE SEQUENCE [LARGE SCALE GENOMIC DNA]</scope>
    <scope>GENOME REANNOTATION</scope>
    <source>
        <strain>ATCC BAA-793 / NCIMB 8826 / WCFS1</strain>
    </source>
</reference>
<proteinExistence type="inferred from homology"/>
<comment type="function">
    <text evidence="1">Negatively regulates transcription of bacterial ribonucleotide reductase nrd genes and operons by binding to NrdR-boxes.</text>
</comment>
<comment type="cofactor">
    <cofactor evidence="1">
        <name>Zn(2+)</name>
        <dbReference type="ChEBI" id="CHEBI:29105"/>
    </cofactor>
    <text evidence="1">Binds 1 zinc ion.</text>
</comment>
<comment type="similarity">
    <text evidence="1">Belongs to the NrdR family.</text>
</comment>
<dbReference type="EMBL" id="AL935263">
    <property type="protein sequence ID" value="CCC78837.1"/>
    <property type="molecule type" value="Genomic_DNA"/>
</dbReference>
<dbReference type="RefSeq" id="WP_003640274.1">
    <property type="nucleotide sequence ID" value="NC_004567.2"/>
</dbReference>
<dbReference type="RefSeq" id="YP_004889351.1">
    <property type="nucleotide sequence ID" value="NC_004567.2"/>
</dbReference>
<dbReference type="SMR" id="Q88WV2"/>
<dbReference type="STRING" id="220668.lp_1511"/>
<dbReference type="EnsemblBacteria" id="CCC78837">
    <property type="protein sequence ID" value="CCC78837"/>
    <property type="gene ID" value="lp_1511"/>
</dbReference>
<dbReference type="GeneID" id="89668894"/>
<dbReference type="KEGG" id="lpl:lp_1511"/>
<dbReference type="PATRIC" id="fig|220668.9.peg.1271"/>
<dbReference type="eggNOG" id="COG1327">
    <property type="taxonomic scope" value="Bacteria"/>
</dbReference>
<dbReference type="HOGENOM" id="CLU_108412_0_0_9"/>
<dbReference type="OrthoDB" id="9807461at2"/>
<dbReference type="PhylomeDB" id="Q88WV2"/>
<dbReference type="Proteomes" id="UP000000432">
    <property type="component" value="Chromosome"/>
</dbReference>
<dbReference type="GO" id="GO:0005524">
    <property type="term" value="F:ATP binding"/>
    <property type="evidence" value="ECO:0007669"/>
    <property type="project" value="UniProtKB-KW"/>
</dbReference>
<dbReference type="GO" id="GO:0003677">
    <property type="term" value="F:DNA binding"/>
    <property type="evidence" value="ECO:0007669"/>
    <property type="project" value="UniProtKB-KW"/>
</dbReference>
<dbReference type="GO" id="GO:0008270">
    <property type="term" value="F:zinc ion binding"/>
    <property type="evidence" value="ECO:0007669"/>
    <property type="project" value="UniProtKB-UniRule"/>
</dbReference>
<dbReference type="GO" id="GO:0045892">
    <property type="term" value="P:negative regulation of DNA-templated transcription"/>
    <property type="evidence" value="ECO:0007669"/>
    <property type="project" value="UniProtKB-UniRule"/>
</dbReference>
<dbReference type="HAMAP" id="MF_00440">
    <property type="entry name" value="NrdR"/>
    <property type="match status" value="1"/>
</dbReference>
<dbReference type="InterPro" id="IPR005144">
    <property type="entry name" value="ATP-cone_dom"/>
</dbReference>
<dbReference type="InterPro" id="IPR055173">
    <property type="entry name" value="NrdR-like_N"/>
</dbReference>
<dbReference type="InterPro" id="IPR003796">
    <property type="entry name" value="RNR_NrdR-like"/>
</dbReference>
<dbReference type="NCBIfam" id="TIGR00244">
    <property type="entry name" value="transcriptional regulator NrdR"/>
    <property type="match status" value="1"/>
</dbReference>
<dbReference type="PANTHER" id="PTHR30455">
    <property type="entry name" value="TRANSCRIPTIONAL REPRESSOR NRDR"/>
    <property type="match status" value="1"/>
</dbReference>
<dbReference type="PANTHER" id="PTHR30455:SF2">
    <property type="entry name" value="TRANSCRIPTIONAL REPRESSOR NRDR"/>
    <property type="match status" value="1"/>
</dbReference>
<dbReference type="Pfam" id="PF03477">
    <property type="entry name" value="ATP-cone"/>
    <property type="match status" value="1"/>
</dbReference>
<dbReference type="Pfam" id="PF22811">
    <property type="entry name" value="Zn_ribbon_NrdR"/>
    <property type="match status" value="1"/>
</dbReference>
<dbReference type="PROSITE" id="PS51161">
    <property type="entry name" value="ATP_CONE"/>
    <property type="match status" value="1"/>
</dbReference>
<protein>
    <recommendedName>
        <fullName evidence="1">Transcriptional repressor NrdR</fullName>
    </recommendedName>
</protein>
<sequence>MQCPHCHHNGSRVVDSRPTDDGRVIRRRRECENCGFRFTTFERVEATPLLVIKKNGAREEFNREKVLRGIIRSAEKRPVSMETMTGVVDDVENKVRSLGENEISSQVIGEYVMEQLADIDEISYIRFASVYRQFKDMHVFLNELQDMMERDKVKLAKPSAKTTHAPKRKKD</sequence>
<evidence type="ECO:0000255" key="1">
    <source>
        <dbReference type="HAMAP-Rule" id="MF_00440"/>
    </source>
</evidence>
<evidence type="ECO:0000256" key="2">
    <source>
        <dbReference type="SAM" id="MobiDB-lite"/>
    </source>
</evidence>